<organism>
    <name type="scientific">Xylella fastidiosa (strain 9a5c)</name>
    <dbReference type="NCBI Taxonomy" id="160492"/>
    <lineage>
        <taxon>Bacteria</taxon>
        <taxon>Pseudomonadati</taxon>
        <taxon>Pseudomonadota</taxon>
        <taxon>Gammaproteobacteria</taxon>
        <taxon>Lysobacterales</taxon>
        <taxon>Lysobacteraceae</taxon>
        <taxon>Xylella</taxon>
    </lineage>
</organism>
<name>TOLB_XYLFA</name>
<comment type="function">
    <text evidence="1">Part of the Tol-Pal system, which plays a role in outer membrane invagination during cell division and is important for maintaining outer membrane integrity.</text>
</comment>
<comment type="subunit">
    <text evidence="1">The Tol-Pal system is composed of five core proteins: the inner membrane proteins TolA, TolQ and TolR, the periplasmic protein TolB and the outer membrane protein Pal. They form a network linking the inner and outer membranes and the peptidoglycan layer.</text>
</comment>
<comment type="subcellular location">
    <subcellularLocation>
        <location evidence="1">Periplasm</location>
    </subcellularLocation>
</comment>
<comment type="similarity">
    <text evidence="1">Belongs to the TolB family.</text>
</comment>
<comment type="sequence caution" evidence="2">
    <conflict type="erroneous initiation">
        <sequence resource="EMBL-CDS" id="AAF84703"/>
    </conflict>
</comment>
<keyword id="KW-0131">Cell cycle</keyword>
<keyword id="KW-0132">Cell division</keyword>
<keyword id="KW-0574">Periplasm</keyword>
<keyword id="KW-0732">Signal</keyword>
<proteinExistence type="inferred from homology"/>
<dbReference type="EMBL" id="AE003849">
    <property type="protein sequence ID" value="AAF84703.1"/>
    <property type="status" value="ALT_INIT"/>
    <property type="molecule type" value="Genomic_DNA"/>
</dbReference>
<dbReference type="PIR" id="F82625">
    <property type="entry name" value="F82625"/>
</dbReference>
<dbReference type="RefSeq" id="WP_023906495.1">
    <property type="nucleotide sequence ID" value="NC_002488.3"/>
</dbReference>
<dbReference type="SMR" id="Q9PC84"/>
<dbReference type="STRING" id="160492.XF_1897"/>
<dbReference type="KEGG" id="xfa:XF_1897"/>
<dbReference type="eggNOG" id="COG0823">
    <property type="taxonomic scope" value="Bacteria"/>
</dbReference>
<dbReference type="HOGENOM" id="CLU_047123_0_0_6"/>
<dbReference type="Proteomes" id="UP000000812">
    <property type="component" value="Chromosome"/>
</dbReference>
<dbReference type="GO" id="GO:0042597">
    <property type="term" value="C:periplasmic space"/>
    <property type="evidence" value="ECO:0007669"/>
    <property type="project" value="UniProtKB-SubCell"/>
</dbReference>
<dbReference type="GO" id="GO:0051301">
    <property type="term" value="P:cell division"/>
    <property type="evidence" value="ECO:0007669"/>
    <property type="project" value="UniProtKB-UniRule"/>
</dbReference>
<dbReference type="GO" id="GO:0017038">
    <property type="term" value="P:protein import"/>
    <property type="evidence" value="ECO:0007669"/>
    <property type="project" value="InterPro"/>
</dbReference>
<dbReference type="Gene3D" id="2.120.10.30">
    <property type="entry name" value="TolB, C-terminal domain"/>
    <property type="match status" value="1"/>
</dbReference>
<dbReference type="Gene3D" id="3.40.50.10070">
    <property type="entry name" value="TolB, N-terminal domain"/>
    <property type="match status" value="1"/>
</dbReference>
<dbReference type="HAMAP" id="MF_00671">
    <property type="entry name" value="TolB"/>
    <property type="match status" value="1"/>
</dbReference>
<dbReference type="InterPro" id="IPR011042">
    <property type="entry name" value="6-blade_b-propeller_TolB-like"/>
</dbReference>
<dbReference type="InterPro" id="IPR011659">
    <property type="entry name" value="PD40"/>
</dbReference>
<dbReference type="InterPro" id="IPR014167">
    <property type="entry name" value="Tol-Pal_TolB"/>
</dbReference>
<dbReference type="InterPro" id="IPR007195">
    <property type="entry name" value="TolB_N"/>
</dbReference>
<dbReference type="NCBIfam" id="TIGR02800">
    <property type="entry name" value="propeller_TolB"/>
    <property type="match status" value="1"/>
</dbReference>
<dbReference type="PANTHER" id="PTHR36842:SF1">
    <property type="entry name" value="PROTEIN TOLB"/>
    <property type="match status" value="1"/>
</dbReference>
<dbReference type="PANTHER" id="PTHR36842">
    <property type="entry name" value="PROTEIN TOLB HOMOLOG"/>
    <property type="match status" value="1"/>
</dbReference>
<dbReference type="Pfam" id="PF07676">
    <property type="entry name" value="PD40"/>
    <property type="match status" value="3"/>
</dbReference>
<dbReference type="Pfam" id="PF04052">
    <property type="entry name" value="TolB_N"/>
    <property type="match status" value="1"/>
</dbReference>
<dbReference type="SUPFAM" id="SSF52964">
    <property type="entry name" value="TolB, N-terminal domain"/>
    <property type="match status" value="1"/>
</dbReference>
<dbReference type="SUPFAM" id="SSF69304">
    <property type="entry name" value="Tricorn protease N-terminal domain"/>
    <property type="match status" value="1"/>
</dbReference>
<gene>
    <name evidence="1" type="primary">tolB</name>
    <name type="ordered locus">XF_1897</name>
</gene>
<protein>
    <recommendedName>
        <fullName evidence="1">Tol-Pal system protein TolB</fullName>
    </recommendedName>
</protein>
<accession>Q9PC84</accession>
<reference key="1">
    <citation type="journal article" date="2000" name="Nature">
        <title>The genome sequence of the plant pathogen Xylella fastidiosa.</title>
        <authorList>
            <person name="Simpson A.J.G."/>
            <person name="Reinach F.C."/>
            <person name="Arruda P."/>
            <person name="Abreu F.A."/>
            <person name="Acencio M."/>
            <person name="Alvarenga R."/>
            <person name="Alves L.M.C."/>
            <person name="Araya J.E."/>
            <person name="Baia G.S."/>
            <person name="Baptista C.S."/>
            <person name="Barros M.H."/>
            <person name="Bonaccorsi E.D."/>
            <person name="Bordin S."/>
            <person name="Bove J.M."/>
            <person name="Briones M.R.S."/>
            <person name="Bueno M.R.P."/>
            <person name="Camargo A.A."/>
            <person name="Camargo L.E.A."/>
            <person name="Carraro D.M."/>
            <person name="Carrer H."/>
            <person name="Colauto N.B."/>
            <person name="Colombo C."/>
            <person name="Costa F.F."/>
            <person name="Costa M.C.R."/>
            <person name="Costa-Neto C.M."/>
            <person name="Coutinho L.L."/>
            <person name="Cristofani M."/>
            <person name="Dias-Neto E."/>
            <person name="Docena C."/>
            <person name="El-Dorry H."/>
            <person name="Facincani A.P."/>
            <person name="Ferreira A.J.S."/>
            <person name="Ferreira V.C.A."/>
            <person name="Ferro J.A."/>
            <person name="Fraga J.S."/>
            <person name="Franca S.C."/>
            <person name="Franco M.C."/>
            <person name="Frohme M."/>
            <person name="Furlan L.R."/>
            <person name="Garnier M."/>
            <person name="Goldman G.H."/>
            <person name="Goldman M.H.S."/>
            <person name="Gomes S.L."/>
            <person name="Gruber A."/>
            <person name="Ho P.L."/>
            <person name="Hoheisel J.D."/>
            <person name="Junqueira M.L."/>
            <person name="Kemper E.L."/>
            <person name="Kitajima J.P."/>
            <person name="Krieger J.E."/>
            <person name="Kuramae E.E."/>
            <person name="Laigret F."/>
            <person name="Lambais M.R."/>
            <person name="Leite L.C.C."/>
            <person name="Lemos E.G.M."/>
            <person name="Lemos M.V.F."/>
            <person name="Lopes S.A."/>
            <person name="Lopes C.R."/>
            <person name="Machado J.A."/>
            <person name="Machado M.A."/>
            <person name="Madeira A.M.B.N."/>
            <person name="Madeira H.M.F."/>
            <person name="Marino C.L."/>
            <person name="Marques M.V."/>
            <person name="Martins E.A.L."/>
            <person name="Martins E.M.F."/>
            <person name="Matsukuma A.Y."/>
            <person name="Menck C.F.M."/>
            <person name="Miracca E.C."/>
            <person name="Miyaki C.Y."/>
            <person name="Monteiro-Vitorello C.B."/>
            <person name="Moon D.H."/>
            <person name="Nagai M.A."/>
            <person name="Nascimento A.L.T.O."/>
            <person name="Netto L.E.S."/>
            <person name="Nhani A. Jr."/>
            <person name="Nobrega F.G."/>
            <person name="Nunes L.R."/>
            <person name="Oliveira M.A."/>
            <person name="de Oliveira M.C."/>
            <person name="de Oliveira R.C."/>
            <person name="Palmieri D.A."/>
            <person name="Paris A."/>
            <person name="Peixoto B.R."/>
            <person name="Pereira G.A.G."/>
            <person name="Pereira H.A. Jr."/>
            <person name="Pesquero J.B."/>
            <person name="Quaggio R.B."/>
            <person name="Roberto P.G."/>
            <person name="Rodrigues V."/>
            <person name="de Rosa A.J.M."/>
            <person name="de Rosa V.E. Jr."/>
            <person name="de Sa R.G."/>
            <person name="Santelli R.V."/>
            <person name="Sawasaki H.E."/>
            <person name="da Silva A.C.R."/>
            <person name="da Silva A.M."/>
            <person name="da Silva F.R."/>
            <person name="Silva W.A. Jr."/>
            <person name="da Silveira J.F."/>
            <person name="Silvestri M.L.Z."/>
            <person name="Siqueira W.J."/>
            <person name="de Souza A.A."/>
            <person name="de Souza A.P."/>
            <person name="Terenzi M.F."/>
            <person name="Truffi D."/>
            <person name="Tsai S.M."/>
            <person name="Tsuhako M.H."/>
            <person name="Vallada H."/>
            <person name="Van Sluys M.A."/>
            <person name="Verjovski-Almeida S."/>
            <person name="Vettore A.L."/>
            <person name="Zago M.A."/>
            <person name="Zatz M."/>
            <person name="Meidanis J."/>
            <person name="Setubal J.C."/>
        </authorList>
    </citation>
    <scope>NUCLEOTIDE SEQUENCE [LARGE SCALE GENOMIC DNA]</scope>
    <source>
        <strain>9a5c</strain>
    </source>
</reference>
<feature type="signal peptide" evidence="1">
    <location>
        <begin position="1"/>
        <end position="22"/>
    </location>
</feature>
<feature type="chain" id="PRO_0000034700" description="Tol-Pal system protein TolB" evidence="1">
    <location>
        <begin position="23"/>
        <end position="439"/>
    </location>
</feature>
<sequence length="439" mass="47612">MTKFPRWLAMLVGLLFPLSALTQQQGLTIDIVGGNTAATPIAVLPMPYHDSVGAPATDVSSVVAADLNRSGQFRTLPLGQIIERPTHGSEIRFPTWQALKQDYIVVGRVLDARQGTYRVEYELFDVRNGKRMLGLAMTARASAMRDVAHQMADAIYEKITGLRGAFFTRIAYVTASGSHGAMRYALMVADSDGYNPQTIVRSAEPLLSPDWSPDGKKLAYVSFEKGGSSIYIQDIATGSRELVSSFRGINAAPSFAPDGHRIALSLSRSGNPEIYVMDLVSKQLIQLTNSFGIDTEPAWSSDGKFIYFTSDRGGRPQIYKVASVGGTATRVTFQGNYNATTSVSYDDKKIVVAQGSGNVYRIAMMDQSSGSTVWNTLSTGSLDESPSFAPNASMVLYAAREGGRGVLYAVSADARVRQRLVSVDSDVREPAWGPYRSVH</sequence>
<evidence type="ECO:0000255" key="1">
    <source>
        <dbReference type="HAMAP-Rule" id="MF_00671"/>
    </source>
</evidence>
<evidence type="ECO:0000305" key="2"/>